<gene>
    <name evidence="1" type="primary">ligA</name>
    <name type="ordered locus">Cpar_0453</name>
</gene>
<name>DNLJ_CHLP8</name>
<accession>B3QLI5</accession>
<organism>
    <name type="scientific">Chlorobaculum parvum (strain DSM 263 / NCIMB 8327)</name>
    <name type="common">Chlorobium vibrioforme subsp. thiosulfatophilum</name>
    <dbReference type="NCBI Taxonomy" id="517417"/>
    <lineage>
        <taxon>Bacteria</taxon>
        <taxon>Pseudomonadati</taxon>
        <taxon>Chlorobiota</taxon>
        <taxon>Chlorobiia</taxon>
        <taxon>Chlorobiales</taxon>
        <taxon>Chlorobiaceae</taxon>
        <taxon>Chlorobaculum</taxon>
    </lineage>
</organism>
<sequence length="674" mass="74450">MDKAKAQQEIGKLRAEIERHNRLYYLEAKPEISDFEFDKLLERLIALETEFPELVTPDSPSQRVGGGITKEFPTVIHREPMLSLSNTYSIGEVSDFCTRVEKLVAAEGGGTPEYVAELKYDGVAISLFYRDGLLVRGSTRGDGRQGDEITANLKTIPSIPLRLQSAGGSLFDAAVNGEVEVRGEVYMRKDDFERLNEERPEEERFANPRNATAGTLKLQDSAEVARRRMSFVAYYLKGHDGEAPTHLRRLEQLKCMGFMTGAAARLCKGMDEIANFIGEWSEKRWTLPYETDGVVLKLNEVGLWDRLGATAKSPRWAIAYKYPAQQAKTVLQGVVFQVGRLGTITPVAELKPTKLAGSTVSRSTLHNFDEIERLGVRIGDHVMIEKSGEVIPKVVSVVLDERPAETAEIEAPSECPVCGTKLERHEGEVSWYCPNEEGCPAQKRGRILHFASRNALDIQNLGESLVSQLVERGFVSDAGDLYSLTQEQLASLDRMAAKSAQNVLDALEKSKKQSYARLLFALGIRHVGAATARELAHACPSIDRLREMGEEELAAVPDIGPVIAASIRDFFAKPWVAAMLEKLAAAGLPMQAGEEKALVNTNFEGQSVIFTGGLERHVRQQAEEMVRERGGKIVSSVSKKTTLVVAGKEAGSKLEKAMKLGVRVIDEDEFERML</sequence>
<comment type="function">
    <text evidence="1">DNA ligase that catalyzes the formation of phosphodiester linkages between 5'-phosphoryl and 3'-hydroxyl groups in double-stranded DNA using NAD as a coenzyme and as the energy source for the reaction. It is essential for DNA replication and repair of damaged DNA.</text>
</comment>
<comment type="catalytic activity">
    <reaction evidence="1">
        <text>NAD(+) + (deoxyribonucleotide)n-3'-hydroxyl + 5'-phospho-(deoxyribonucleotide)m = (deoxyribonucleotide)n+m + AMP + beta-nicotinamide D-nucleotide.</text>
        <dbReference type="EC" id="6.5.1.2"/>
    </reaction>
</comment>
<comment type="cofactor">
    <cofactor evidence="1">
        <name>Mg(2+)</name>
        <dbReference type="ChEBI" id="CHEBI:18420"/>
    </cofactor>
    <cofactor evidence="1">
        <name>Mn(2+)</name>
        <dbReference type="ChEBI" id="CHEBI:29035"/>
    </cofactor>
</comment>
<comment type="similarity">
    <text evidence="1">Belongs to the NAD-dependent DNA ligase family. LigA subfamily.</text>
</comment>
<proteinExistence type="inferred from homology"/>
<protein>
    <recommendedName>
        <fullName evidence="1">DNA ligase</fullName>
        <ecNumber evidence="1">6.5.1.2</ecNumber>
    </recommendedName>
    <alternativeName>
        <fullName evidence="1">Polydeoxyribonucleotide synthase [NAD(+)]</fullName>
    </alternativeName>
</protein>
<keyword id="KW-0227">DNA damage</keyword>
<keyword id="KW-0234">DNA repair</keyword>
<keyword id="KW-0235">DNA replication</keyword>
<keyword id="KW-0436">Ligase</keyword>
<keyword id="KW-0460">Magnesium</keyword>
<keyword id="KW-0464">Manganese</keyword>
<keyword id="KW-0479">Metal-binding</keyword>
<keyword id="KW-0520">NAD</keyword>
<keyword id="KW-0862">Zinc</keyword>
<dbReference type="EC" id="6.5.1.2" evidence="1"/>
<dbReference type="EMBL" id="CP001099">
    <property type="protein sequence ID" value="ACF10875.1"/>
    <property type="molecule type" value="Genomic_DNA"/>
</dbReference>
<dbReference type="RefSeq" id="WP_012501708.1">
    <property type="nucleotide sequence ID" value="NC_011027.1"/>
</dbReference>
<dbReference type="SMR" id="B3QLI5"/>
<dbReference type="STRING" id="517417.Cpar_0453"/>
<dbReference type="KEGG" id="cpc:Cpar_0453"/>
<dbReference type="eggNOG" id="COG0272">
    <property type="taxonomic scope" value="Bacteria"/>
</dbReference>
<dbReference type="HOGENOM" id="CLU_007764_2_1_10"/>
<dbReference type="OrthoDB" id="9759736at2"/>
<dbReference type="Proteomes" id="UP000008811">
    <property type="component" value="Chromosome"/>
</dbReference>
<dbReference type="GO" id="GO:0005829">
    <property type="term" value="C:cytosol"/>
    <property type="evidence" value="ECO:0007669"/>
    <property type="project" value="TreeGrafter"/>
</dbReference>
<dbReference type="GO" id="GO:0003677">
    <property type="term" value="F:DNA binding"/>
    <property type="evidence" value="ECO:0007669"/>
    <property type="project" value="InterPro"/>
</dbReference>
<dbReference type="GO" id="GO:0003911">
    <property type="term" value="F:DNA ligase (NAD+) activity"/>
    <property type="evidence" value="ECO:0007669"/>
    <property type="project" value="UniProtKB-UniRule"/>
</dbReference>
<dbReference type="GO" id="GO:0046872">
    <property type="term" value="F:metal ion binding"/>
    <property type="evidence" value="ECO:0007669"/>
    <property type="project" value="UniProtKB-KW"/>
</dbReference>
<dbReference type="GO" id="GO:0006281">
    <property type="term" value="P:DNA repair"/>
    <property type="evidence" value="ECO:0007669"/>
    <property type="project" value="UniProtKB-KW"/>
</dbReference>
<dbReference type="GO" id="GO:0006260">
    <property type="term" value="P:DNA replication"/>
    <property type="evidence" value="ECO:0007669"/>
    <property type="project" value="UniProtKB-KW"/>
</dbReference>
<dbReference type="CDD" id="cd17748">
    <property type="entry name" value="BRCT_DNA_ligase_like"/>
    <property type="match status" value="1"/>
</dbReference>
<dbReference type="CDD" id="cd00114">
    <property type="entry name" value="LIGANc"/>
    <property type="match status" value="1"/>
</dbReference>
<dbReference type="FunFam" id="1.10.150.20:FF:000006">
    <property type="entry name" value="DNA ligase"/>
    <property type="match status" value="1"/>
</dbReference>
<dbReference type="FunFam" id="1.10.150.20:FF:000007">
    <property type="entry name" value="DNA ligase"/>
    <property type="match status" value="1"/>
</dbReference>
<dbReference type="FunFam" id="2.40.50.140:FF:000012">
    <property type="entry name" value="DNA ligase"/>
    <property type="match status" value="1"/>
</dbReference>
<dbReference type="Gene3D" id="6.20.10.30">
    <property type="match status" value="1"/>
</dbReference>
<dbReference type="Gene3D" id="1.10.150.20">
    <property type="entry name" value="5' to 3' exonuclease, C-terminal subdomain"/>
    <property type="match status" value="2"/>
</dbReference>
<dbReference type="Gene3D" id="3.40.50.10190">
    <property type="entry name" value="BRCT domain"/>
    <property type="match status" value="1"/>
</dbReference>
<dbReference type="Gene3D" id="3.30.470.30">
    <property type="entry name" value="DNA ligase/mRNA capping enzyme"/>
    <property type="match status" value="1"/>
</dbReference>
<dbReference type="Gene3D" id="1.10.287.610">
    <property type="entry name" value="Helix hairpin bin"/>
    <property type="match status" value="1"/>
</dbReference>
<dbReference type="Gene3D" id="2.40.50.140">
    <property type="entry name" value="Nucleic acid-binding proteins"/>
    <property type="match status" value="1"/>
</dbReference>
<dbReference type="HAMAP" id="MF_01588">
    <property type="entry name" value="DNA_ligase_A"/>
    <property type="match status" value="1"/>
</dbReference>
<dbReference type="InterPro" id="IPR001357">
    <property type="entry name" value="BRCT_dom"/>
</dbReference>
<dbReference type="InterPro" id="IPR036420">
    <property type="entry name" value="BRCT_dom_sf"/>
</dbReference>
<dbReference type="InterPro" id="IPR041663">
    <property type="entry name" value="DisA/LigA_HHH"/>
</dbReference>
<dbReference type="InterPro" id="IPR001679">
    <property type="entry name" value="DNA_ligase"/>
</dbReference>
<dbReference type="InterPro" id="IPR013839">
    <property type="entry name" value="DNAligase_adenylation"/>
</dbReference>
<dbReference type="InterPro" id="IPR013840">
    <property type="entry name" value="DNAligase_N"/>
</dbReference>
<dbReference type="InterPro" id="IPR003583">
    <property type="entry name" value="Hlx-hairpin-Hlx_DNA-bd_motif"/>
</dbReference>
<dbReference type="InterPro" id="IPR012340">
    <property type="entry name" value="NA-bd_OB-fold"/>
</dbReference>
<dbReference type="InterPro" id="IPR004150">
    <property type="entry name" value="NAD_DNA_ligase_OB"/>
</dbReference>
<dbReference type="InterPro" id="IPR010994">
    <property type="entry name" value="RuvA_2-like"/>
</dbReference>
<dbReference type="InterPro" id="IPR004149">
    <property type="entry name" value="Znf_DNAligase_C4"/>
</dbReference>
<dbReference type="NCBIfam" id="TIGR00575">
    <property type="entry name" value="dnlj"/>
    <property type="match status" value="1"/>
</dbReference>
<dbReference type="NCBIfam" id="NF005932">
    <property type="entry name" value="PRK07956.1"/>
    <property type="match status" value="1"/>
</dbReference>
<dbReference type="PANTHER" id="PTHR23389">
    <property type="entry name" value="CHROMOSOME TRANSMISSION FIDELITY FACTOR 18"/>
    <property type="match status" value="1"/>
</dbReference>
<dbReference type="PANTHER" id="PTHR23389:SF9">
    <property type="entry name" value="DNA LIGASE"/>
    <property type="match status" value="1"/>
</dbReference>
<dbReference type="Pfam" id="PF00533">
    <property type="entry name" value="BRCT"/>
    <property type="match status" value="1"/>
</dbReference>
<dbReference type="Pfam" id="PF01653">
    <property type="entry name" value="DNA_ligase_aden"/>
    <property type="match status" value="1"/>
</dbReference>
<dbReference type="Pfam" id="PF03120">
    <property type="entry name" value="DNA_ligase_OB"/>
    <property type="match status" value="1"/>
</dbReference>
<dbReference type="Pfam" id="PF03119">
    <property type="entry name" value="DNA_ligase_ZBD"/>
    <property type="match status" value="1"/>
</dbReference>
<dbReference type="Pfam" id="PF12826">
    <property type="entry name" value="HHH_2"/>
    <property type="match status" value="1"/>
</dbReference>
<dbReference type="Pfam" id="PF14520">
    <property type="entry name" value="HHH_5"/>
    <property type="match status" value="1"/>
</dbReference>
<dbReference type="PIRSF" id="PIRSF001604">
    <property type="entry name" value="LigA"/>
    <property type="match status" value="1"/>
</dbReference>
<dbReference type="SMART" id="SM00292">
    <property type="entry name" value="BRCT"/>
    <property type="match status" value="1"/>
</dbReference>
<dbReference type="SMART" id="SM00278">
    <property type="entry name" value="HhH1"/>
    <property type="match status" value="4"/>
</dbReference>
<dbReference type="SMART" id="SM00532">
    <property type="entry name" value="LIGANc"/>
    <property type="match status" value="1"/>
</dbReference>
<dbReference type="SUPFAM" id="SSF52113">
    <property type="entry name" value="BRCT domain"/>
    <property type="match status" value="1"/>
</dbReference>
<dbReference type="SUPFAM" id="SSF56091">
    <property type="entry name" value="DNA ligase/mRNA capping enzyme, catalytic domain"/>
    <property type="match status" value="1"/>
</dbReference>
<dbReference type="SUPFAM" id="SSF50249">
    <property type="entry name" value="Nucleic acid-binding proteins"/>
    <property type="match status" value="1"/>
</dbReference>
<dbReference type="SUPFAM" id="SSF47781">
    <property type="entry name" value="RuvA domain 2-like"/>
    <property type="match status" value="1"/>
</dbReference>
<dbReference type="PROSITE" id="PS50172">
    <property type="entry name" value="BRCT"/>
    <property type="match status" value="1"/>
</dbReference>
<feature type="chain" id="PRO_0000380333" description="DNA ligase">
    <location>
        <begin position="1"/>
        <end position="674"/>
    </location>
</feature>
<feature type="domain" description="BRCT" evidence="1">
    <location>
        <begin position="598"/>
        <end position="674"/>
    </location>
</feature>
<feature type="active site" description="N6-AMP-lysine intermediate" evidence="1">
    <location>
        <position position="119"/>
    </location>
</feature>
<feature type="binding site" evidence="1">
    <location>
        <begin position="34"/>
        <end position="38"/>
    </location>
    <ligand>
        <name>NAD(+)</name>
        <dbReference type="ChEBI" id="CHEBI:57540"/>
    </ligand>
</feature>
<feature type="binding site" evidence="1">
    <location>
        <begin position="83"/>
        <end position="84"/>
    </location>
    <ligand>
        <name>NAD(+)</name>
        <dbReference type="ChEBI" id="CHEBI:57540"/>
    </ligand>
</feature>
<feature type="binding site" evidence="1">
    <location>
        <position position="117"/>
    </location>
    <ligand>
        <name>NAD(+)</name>
        <dbReference type="ChEBI" id="CHEBI:57540"/>
    </ligand>
</feature>
<feature type="binding site" evidence="1">
    <location>
        <position position="140"/>
    </location>
    <ligand>
        <name>NAD(+)</name>
        <dbReference type="ChEBI" id="CHEBI:57540"/>
    </ligand>
</feature>
<feature type="binding site" evidence="1">
    <location>
        <position position="184"/>
    </location>
    <ligand>
        <name>NAD(+)</name>
        <dbReference type="ChEBI" id="CHEBI:57540"/>
    </ligand>
</feature>
<feature type="binding site" evidence="1">
    <location>
        <position position="297"/>
    </location>
    <ligand>
        <name>NAD(+)</name>
        <dbReference type="ChEBI" id="CHEBI:57540"/>
    </ligand>
</feature>
<feature type="binding site" evidence="1">
    <location>
        <position position="321"/>
    </location>
    <ligand>
        <name>NAD(+)</name>
        <dbReference type="ChEBI" id="CHEBI:57540"/>
    </ligand>
</feature>
<feature type="binding site" evidence="1">
    <location>
        <position position="415"/>
    </location>
    <ligand>
        <name>Zn(2+)</name>
        <dbReference type="ChEBI" id="CHEBI:29105"/>
    </ligand>
</feature>
<feature type="binding site" evidence="1">
    <location>
        <position position="418"/>
    </location>
    <ligand>
        <name>Zn(2+)</name>
        <dbReference type="ChEBI" id="CHEBI:29105"/>
    </ligand>
</feature>
<feature type="binding site" evidence="1">
    <location>
        <position position="433"/>
    </location>
    <ligand>
        <name>Zn(2+)</name>
        <dbReference type="ChEBI" id="CHEBI:29105"/>
    </ligand>
</feature>
<feature type="binding site" evidence="1">
    <location>
        <position position="439"/>
    </location>
    <ligand>
        <name>Zn(2+)</name>
        <dbReference type="ChEBI" id="CHEBI:29105"/>
    </ligand>
</feature>
<reference key="1">
    <citation type="submission" date="2008-06" db="EMBL/GenBank/DDBJ databases">
        <title>Complete sequence of Chlorobaculum parvum NCIB 8327.</title>
        <authorList>
            <consortium name="US DOE Joint Genome Institute"/>
            <person name="Lucas S."/>
            <person name="Copeland A."/>
            <person name="Lapidus A."/>
            <person name="Glavina del Rio T."/>
            <person name="Dalin E."/>
            <person name="Tice H."/>
            <person name="Bruce D."/>
            <person name="Goodwin L."/>
            <person name="Pitluck S."/>
            <person name="Schmutz J."/>
            <person name="Larimer F."/>
            <person name="Land M."/>
            <person name="Hauser L."/>
            <person name="Kyrpides N."/>
            <person name="Mikhailova N."/>
            <person name="Zhao F."/>
            <person name="Li T."/>
            <person name="Liu Z."/>
            <person name="Overmann J."/>
            <person name="Bryant D.A."/>
            <person name="Richardson P."/>
        </authorList>
    </citation>
    <scope>NUCLEOTIDE SEQUENCE [LARGE SCALE GENOMIC DNA]</scope>
    <source>
        <strain>DSM 263 / NCIMB 8327</strain>
    </source>
</reference>
<evidence type="ECO:0000255" key="1">
    <source>
        <dbReference type="HAMAP-Rule" id="MF_01588"/>
    </source>
</evidence>